<dbReference type="EMBL" id="AF110791">
    <property type="protein sequence ID" value="AAD55573.1"/>
    <property type="molecule type" value="mRNA"/>
</dbReference>
<dbReference type="RefSeq" id="XP_002946525.1">
    <property type="nucleotide sequence ID" value="XM_002946479.1"/>
</dbReference>
<dbReference type="KEGG" id="vcn:VOLCADRAFT_72648"/>
<dbReference type="OMA" id="AHKGAFE"/>
<dbReference type="GO" id="GO:0009535">
    <property type="term" value="C:chloroplast thylakoid membrane"/>
    <property type="evidence" value="ECO:0007669"/>
    <property type="project" value="UniProtKB-SubCell"/>
</dbReference>
<dbReference type="CDD" id="cd22950">
    <property type="entry name" value="petO"/>
    <property type="match status" value="1"/>
</dbReference>
<proteinExistence type="evidence at transcript level"/>
<gene>
    <name type="primary">PETO</name>
</gene>
<protein>
    <recommendedName>
        <fullName>Cytochrome b6-f complex subunit petO, chloroplastic</fullName>
    </recommendedName>
    <alternativeName>
        <fullName>Cytochrome b6-f complex subunit V</fullName>
        <shortName>suV</shortName>
    </alternativeName>
    <alternativeName>
        <fullName>Cytochrome b6-f-associated phosphoprotein</fullName>
    </alternativeName>
</protein>
<evidence type="ECO:0000250" key="1"/>
<evidence type="ECO:0000255" key="2"/>
<evidence type="ECO:0000256" key="3">
    <source>
        <dbReference type="SAM" id="MobiDB-lite"/>
    </source>
</evidence>
<evidence type="ECO:0000305" key="4"/>
<comment type="function">
    <text>The cytochrome b6-f complex functions in the linear cross-membrane transport of electrons between photosystem II and I, as well as in cyclic electron flow around photosystem I.</text>
</comment>
<comment type="subcellular location">
    <subcellularLocation>
        <location evidence="1">Plastid</location>
        <location evidence="1">Chloroplast thylakoid membrane</location>
        <topology evidence="1">Single-pass membrane protein</topology>
    </subcellularLocation>
</comment>
<comment type="PTM">
    <text evidence="1">Phosphorylated.</text>
</comment>
<comment type="similarity">
    <text evidence="4">Belongs to the petO family.</text>
</comment>
<reference key="1">
    <citation type="journal article" date="1999" name="Curr. Genet.">
        <title>Volvox germline-specific genes that are putative targets of RegA repression encode chloroplast proteins.</title>
        <authorList>
            <person name="Meissner M."/>
            <person name="Stark K."/>
            <person name="Cresnar B."/>
            <person name="Kirk D.L."/>
            <person name="Schmitt R."/>
        </authorList>
    </citation>
    <scope>NUCLEOTIDE SEQUENCE [MRNA]</scope>
    <source>
        <strain>f. Nagariensis</strain>
    </source>
</reference>
<feature type="transit peptide" description="Chloroplast" evidence="1">
    <location>
        <begin position="1"/>
        <end position="53"/>
    </location>
</feature>
<feature type="chain" id="PRO_0000023866" description="Cytochrome b6-f complex subunit petO, chloroplastic">
    <location>
        <begin position="54"/>
        <end position="203"/>
    </location>
</feature>
<feature type="topological domain" description="Lumenal" evidence="2">
    <location>
        <begin position="54"/>
        <end position="120"/>
    </location>
</feature>
<feature type="transmembrane region" description="Helical" evidence="2">
    <location>
        <begin position="121"/>
        <end position="141"/>
    </location>
</feature>
<feature type="topological domain" description="Stromal" evidence="2">
    <location>
        <begin position="142"/>
        <end position="203"/>
    </location>
</feature>
<feature type="region of interest" description="Disordered" evidence="3">
    <location>
        <begin position="79"/>
        <end position="118"/>
    </location>
</feature>
<feature type="compositionally biased region" description="Basic and acidic residues" evidence="3">
    <location>
        <begin position="104"/>
        <end position="118"/>
    </location>
</feature>
<sequence>MALATRCKAPAAVCAAHSRRSVKVSAHKGAFEQVQVAAAAVAAAALLASPANAGVVLQQPELKKVFQDDAPAPAPVKREFKGLAPPSLPKPVEAPKPAAVAAAPEKKEEVKESGSDLDPRSIALPGALALTIGGFFAASKIDTSFNEWFIEAVVKDSNNYAGYEATLKTDAGVVFPKAATAGTKKVKAATGSKKGGFPFGGKK</sequence>
<keyword id="KW-0150">Chloroplast</keyword>
<keyword id="KW-0249">Electron transport</keyword>
<keyword id="KW-0472">Membrane</keyword>
<keyword id="KW-0597">Phosphoprotein</keyword>
<keyword id="KW-0934">Plastid</keyword>
<keyword id="KW-0679">Respiratory chain</keyword>
<keyword id="KW-0793">Thylakoid</keyword>
<keyword id="KW-0809">Transit peptide</keyword>
<keyword id="KW-0812">Transmembrane</keyword>
<keyword id="KW-1133">Transmembrane helix</keyword>
<keyword id="KW-0813">Transport</keyword>
<name>PETO_VOLCA</name>
<accession>Q9SBM5</accession>
<organism>
    <name type="scientific">Volvox carteri</name>
    <name type="common">Green alga</name>
    <dbReference type="NCBI Taxonomy" id="3067"/>
    <lineage>
        <taxon>Eukaryota</taxon>
        <taxon>Viridiplantae</taxon>
        <taxon>Chlorophyta</taxon>
        <taxon>core chlorophytes</taxon>
        <taxon>Chlorophyceae</taxon>
        <taxon>CS clade</taxon>
        <taxon>Chlamydomonadales</taxon>
        <taxon>Volvocaceae</taxon>
        <taxon>Volvox</taxon>
    </lineage>
</organism>